<proteinExistence type="inferred from homology"/>
<evidence type="ECO:0000250" key="1">
    <source>
        <dbReference type="UniProtKB" id="Q96DW6"/>
    </source>
</evidence>
<evidence type="ECO:0000255" key="2">
    <source>
        <dbReference type="HAMAP-Rule" id="MF_03064"/>
    </source>
</evidence>
<gene>
    <name type="ordered locus">DEHA2G22418g</name>
</gene>
<dbReference type="EMBL" id="CR382139">
    <property type="protein sequence ID" value="CAG91029.1"/>
    <property type="molecule type" value="Genomic_DNA"/>
</dbReference>
<dbReference type="RefSeq" id="XP_462519.1">
    <property type="nucleotide sequence ID" value="XM_462519.1"/>
</dbReference>
<dbReference type="SMR" id="Q6BH02"/>
<dbReference type="FunCoup" id="Q6BH02">
    <property type="interactions" value="114"/>
</dbReference>
<dbReference type="STRING" id="284592.Q6BH02"/>
<dbReference type="GeneID" id="2905471"/>
<dbReference type="KEGG" id="dha:DEHA2G22418g"/>
<dbReference type="VEuPathDB" id="FungiDB:DEHA2G22418g"/>
<dbReference type="eggNOG" id="KOG0766">
    <property type="taxonomic scope" value="Eukaryota"/>
</dbReference>
<dbReference type="HOGENOM" id="CLU_015166_0_3_1"/>
<dbReference type="InParanoid" id="Q6BH02"/>
<dbReference type="OMA" id="WGIYEEL"/>
<dbReference type="OrthoDB" id="1924968at2759"/>
<dbReference type="Proteomes" id="UP000000599">
    <property type="component" value="Chromosome G"/>
</dbReference>
<dbReference type="GO" id="GO:0005743">
    <property type="term" value="C:mitochondrial inner membrane"/>
    <property type="evidence" value="ECO:0007669"/>
    <property type="project" value="UniProtKB-SubCell"/>
</dbReference>
<dbReference type="GO" id="GO:0015187">
    <property type="term" value="F:glycine transmembrane transporter activity"/>
    <property type="evidence" value="ECO:0007669"/>
    <property type="project" value="UniProtKB-UniRule"/>
</dbReference>
<dbReference type="GO" id="GO:1904983">
    <property type="term" value="P:glycine import into mitochondrion"/>
    <property type="evidence" value="ECO:0007669"/>
    <property type="project" value="UniProtKB-UniRule"/>
</dbReference>
<dbReference type="Gene3D" id="1.50.40.10">
    <property type="entry name" value="Mitochondrial carrier domain"/>
    <property type="match status" value="1"/>
</dbReference>
<dbReference type="HAMAP" id="MF_03064">
    <property type="entry name" value="SLC25A38"/>
    <property type="match status" value="1"/>
</dbReference>
<dbReference type="InterPro" id="IPR030847">
    <property type="entry name" value="Hem25/SLC25A38"/>
</dbReference>
<dbReference type="InterPro" id="IPR018108">
    <property type="entry name" value="Mitochondrial_sb/sol_carrier"/>
</dbReference>
<dbReference type="InterPro" id="IPR023395">
    <property type="entry name" value="Mt_carrier_dom_sf"/>
</dbReference>
<dbReference type="PANTHER" id="PTHR46181">
    <property type="entry name" value="MITOCHONDRIAL GLYCINE TRANSPORTER"/>
    <property type="match status" value="1"/>
</dbReference>
<dbReference type="PANTHER" id="PTHR46181:SF3">
    <property type="entry name" value="MITOCHONDRIAL GLYCINE TRANSPORTER"/>
    <property type="match status" value="1"/>
</dbReference>
<dbReference type="Pfam" id="PF00153">
    <property type="entry name" value="Mito_carr"/>
    <property type="match status" value="3"/>
</dbReference>
<dbReference type="SUPFAM" id="SSF103506">
    <property type="entry name" value="Mitochondrial carrier"/>
    <property type="match status" value="1"/>
</dbReference>
<dbReference type="PROSITE" id="PS50920">
    <property type="entry name" value="SOLCAR"/>
    <property type="match status" value="3"/>
</dbReference>
<keyword id="KW-0472">Membrane</keyword>
<keyword id="KW-0496">Mitochondrion</keyword>
<keyword id="KW-0999">Mitochondrion inner membrane</keyword>
<keyword id="KW-1185">Reference proteome</keyword>
<keyword id="KW-0677">Repeat</keyword>
<keyword id="KW-0812">Transmembrane</keyword>
<keyword id="KW-1133">Transmembrane helix</keyword>
<keyword id="KW-0813">Transport</keyword>
<reference key="1">
    <citation type="journal article" date="2004" name="Nature">
        <title>Genome evolution in yeasts.</title>
        <authorList>
            <person name="Dujon B."/>
            <person name="Sherman D."/>
            <person name="Fischer G."/>
            <person name="Durrens P."/>
            <person name="Casaregola S."/>
            <person name="Lafontaine I."/>
            <person name="de Montigny J."/>
            <person name="Marck C."/>
            <person name="Neuveglise C."/>
            <person name="Talla E."/>
            <person name="Goffard N."/>
            <person name="Frangeul L."/>
            <person name="Aigle M."/>
            <person name="Anthouard V."/>
            <person name="Babour A."/>
            <person name="Barbe V."/>
            <person name="Barnay S."/>
            <person name="Blanchin S."/>
            <person name="Beckerich J.-M."/>
            <person name="Beyne E."/>
            <person name="Bleykasten C."/>
            <person name="Boisrame A."/>
            <person name="Boyer J."/>
            <person name="Cattolico L."/>
            <person name="Confanioleri F."/>
            <person name="de Daruvar A."/>
            <person name="Despons L."/>
            <person name="Fabre E."/>
            <person name="Fairhead C."/>
            <person name="Ferry-Dumazet H."/>
            <person name="Groppi A."/>
            <person name="Hantraye F."/>
            <person name="Hennequin C."/>
            <person name="Jauniaux N."/>
            <person name="Joyet P."/>
            <person name="Kachouri R."/>
            <person name="Kerrest A."/>
            <person name="Koszul R."/>
            <person name="Lemaire M."/>
            <person name="Lesur I."/>
            <person name="Ma L."/>
            <person name="Muller H."/>
            <person name="Nicaud J.-M."/>
            <person name="Nikolski M."/>
            <person name="Oztas S."/>
            <person name="Ozier-Kalogeropoulos O."/>
            <person name="Pellenz S."/>
            <person name="Potier S."/>
            <person name="Richard G.-F."/>
            <person name="Straub M.-L."/>
            <person name="Suleau A."/>
            <person name="Swennen D."/>
            <person name="Tekaia F."/>
            <person name="Wesolowski-Louvel M."/>
            <person name="Westhof E."/>
            <person name="Wirth B."/>
            <person name="Zeniou-Meyer M."/>
            <person name="Zivanovic Y."/>
            <person name="Bolotin-Fukuhara M."/>
            <person name="Thierry A."/>
            <person name="Bouchier C."/>
            <person name="Caudron B."/>
            <person name="Scarpelli C."/>
            <person name="Gaillardin C."/>
            <person name="Weissenbach J."/>
            <person name="Wincker P."/>
            <person name="Souciet J.-L."/>
        </authorList>
    </citation>
    <scope>NUCLEOTIDE SEQUENCE [LARGE SCALE GENOMIC DNA]</scope>
    <source>
        <strain>ATCC 36239 / CBS 767 / BCRC 21394 / JCM 1990 / NBRC 0083 / IGC 2968</strain>
    </source>
</reference>
<feature type="chain" id="PRO_0000378935" description="Mitochondrial glycine transporter">
    <location>
        <begin position="1"/>
        <end position="340"/>
    </location>
</feature>
<feature type="transmembrane region" description="Helical; Name=1" evidence="2">
    <location>
        <begin position="29"/>
        <end position="54"/>
    </location>
</feature>
<feature type="transmembrane region" description="Helical; Name=2" evidence="2">
    <location>
        <begin position="83"/>
        <end position="109"/>
    </location>
</feature>
<feature type="transmembrane region" description="Helical; Name=3" evidence="2">
    <location>
        <begin position="134"/>
        <end position="159"/>
    </location>
</feature>
<feature type="transmembrane region" description="Helical; Name=4" evidence="2">
    <location>
        <begin position="193"/>
        <end position="216"/>
    </location>
</feature>
<feature type="transmembrane region" description="Helical; Name=5" evidence="2">
    <location>
        <begin position="241"/>
        <end position="267"/>
    </location>
</feature>
<feature type="transmembrane region" description="Helical; Name=6" evidence="2">
    <location>
        <begin position="300"/>
        <end position="318"/>
    </location>
</feature>
<feature type="repeat" description="Solcar 1" evidence="2">
    <location>
        <begin position="23"/>
        <end position="108"/>
    </location>
</feature>
<feature type="repeat" description="Solcar 2" evidence="2">
    <location>
        <begin position="128"/>
        <end position="218"/>
    </location>
</feature>
<feature type="repeat" description="Solcar 3" evidence="2">
    <location>
        <begin position="237"/>
        <end position="325"/>
    </location>
</feature>
<protein>
    <recommendedName>
        <fullName evidence="2">Mitochondrial glycine transporter</fullName>
    </recommendedName>
    <alternativeName>
        <fullName evidence="2">Solute carrier family 25 member 38 homolog</fullName>
    </alternativeName>
</protein>
<sequence length="340" mass="37608">MVSDVSEPSDTTPEVVVQQQPQPKTLTHLISGASAGLISAISLQPFDLLKTRLQQQQRSNIKYRTTISKELKKLTHIRDLWRGALPSTLRTSVGAGLYFTILSSARNGISDYKRSSDSVSDTSILPKLSPFENLATGFIVRAVVGIITMPITIVKTRYESNIYNYNSMYEGFENIYLDGNQKGQGSLKNFFKGSFATLARDCPYAGMYVLFYELFKNDILTKVVPPIDETENGPITRSTIINTSAAILAASVSTTITAPFDAIKTRLQLSSIVASKKMTLWSATKDLMREDGGVKNLFRGLSLRFGRKGLSSGISWCIYEELIKSNFAQVIITKSDKKLV</sequence>
<comment type="function">
    <text evidence="2">Mitochondrial glycine transporter that imports glycine into the mitochondrial matrix. Plays an important role in providing glycine for the first enzymatic step in heme biosynthesis, the condensation of glycine with succinyl-CoA to produce 5-aminolevulinate (ALA) in the mitochondrial matrix.</text>
</comment>
<comment type="catalytic activity">
    <reaction evidence="1">
        <text>glycine(in) = glycine(out)</text>
        <dbReference type="Rhea" id="RHEA:70715"/>
        <dbReference type="ChEBI" id="CHEBI:57305"/>
    </reaction>
</comment>
<comment type="subcellular location">
    <subcellularLocation>
        <location evidence="2">Mitochondrion inner membrane</location>
        <topology evidence="2">Multi-pass membrane protein</topology>
    </subcellularLocation>
</comment>
<comment type="similarity">
    <text evidence="2">Belongs to the mitochondrial carrier (TC 2.A.29) family. SLC25A38 subfamily.</text>
</comment>
<name>S2538_DEBHA</name>
<organism>
    <name type="scientific">Debaryomyces hansenii (strain ATCC 36239 / CBS 767 / BCRC 21394 / JCM 1990 / NBRC 0083 / IGC 2968)</name>
    <name type="common">Yeast</name>
    <name type="synonym">Torulaspora hansenii</name>
    <dbReference type="NCBI Taxonomy" id="284592"/>
    <lineage>
        <taxon>Eukaryota</taxon>
        <taxon>Fungi</taxon>
        <taxon>Dikarya</taxon>
        <taxon>Ascomycota</taxon>
        <taxon>Saccharomycotina</taxon>
        <taxon>Pichiomycetes</taxon>
        <taxon>Debaryomycetaceae</taxon>
        <taxon>Debaryomyces</taxon>
    </lineage>
</organism>
<accession>Q6BH02</accession>